<gene>
    <name evidence="1" type="primary">lacB</name>
    <name type="ordered locus">Sez_0454</name>
</gene>
<accession>B4U1F9</accession>
<sequence length="171" mass="18952">MKIAIGCDHIVTNEKMAVSDFLKSKGYEVIDCGTYDHTRTHYPIFGKRVGEAVANGRADLGVCICGTGVGINNAVNKVSGIRSALVRDMTTALYAKEELNANVIGFGGKITGELLMCDIIDAFIKADYRETDDNKKLLAKIAHLETQHVNQEDPDFFNEFLDKWDRGDYQD</sequence>
<name>LACB_STREM</name>
<evidence type="ECO:0000255" key="1">
    <source>
        <dbReference type="HAMAP-Rule" id="MF_01556"/>
    </source>
</evidence>
<feature type="chain" id="PRO_1000147085" description="Galactose-6-phosphate isomerase subunit LacB">
    <location>
        <begin position="1"/>
        <end position="171"/>
    </location>
</feature>
<keyword id="KW-0413">Isomerase</keyword>
<keyword id="KW-0423">Lactose metabolism</keyword>
<comment type="catalytic activity">
    <reaction evidence="1">
        <text>aldehydo-D-galactose 6-phosphate = keto-D-tagatose 6-phosphate</text>
        <dbReference type="Rhea" id="RHEA:13033"/>
        <dbReference type="ChEBI" id="CHEBI:58255"/>
        <dbReference type="ChEBI" id="CHEBI:134283"/>
        <dbReference type="EC" id="5.3.1.26"/>
    </reaction>
</comment>
<comment type="pathway">
    <text evidence="1">Carbohydrate metabolism; D-galactose 6-phosphate degradation; D-tagatose 6-phosphate from D-galactose 6-phosphate: step 1/1.</text>
</comment>
<comment type="subunit">
    <text evidence="1">Heteromultimeric protein consisting of LacA and LacB.</text>
</comment>
<comment type="similarity">
    <text evidence="1">Belongs to the LacAB/RpiB family.</text>
</comment>
<protein>
    <recommendedName>
        <fullName evidence="1">Galactose-6-phosphate isomerase subunit LacB</fullName>
        <ecNumber evidence="1">5.3.1.26</ecNumber>
    </recommendedName>
</protein>
<reference key="1">
    <citation type="journal article" date="2008" name="PLoS ONE">
        <title>Genome sequence of a lancefield group C Streptococcus zooepidemicus strain causing epidemic nephritis: new information about an old disease.</title>
        <authorList>
            <person name="Beres S.B."/>
            <person name="Sesso R."/>
            <person name="Pinto S.W.L."/>
            <person name="Hoe N.P."/>
            <person name="Porcella S.F."/>
            <person name="Deleo F.R."/>
            <person name="Musser J.M."/>
        </authorList>
    </citation>
    <scope>NUCLEOTIDE SEQUENCE [LARGE SCALE GENOMIC DNA]</scope>
    <source>
        <strain>MGCS10565</strain>
    </source>
</reference>
<dbReference type="EC" id="5.3.1.26" evidence="1"/>
<dbReference type="EMBL" id="CP001129">
    <property type="protein sequence ID" value="ACG61826.1"/>
    <property type="molecule type" value="Genomic_DNA"/>
</dbReference>
<dbReference type="RefSeq" id="WP_012515102.1">
    <property type="nucleotide sequence ID" value="NC_011134.1"/>
</dbReference>
<dbReference type="SMR" id="B4U1F9"/>
<dbReference type="KEGG" id="sez:Sez_0454"/>
<dbReference type="HOGENOM" id="CLU_091396_2_0_9"/>
<dbReference type="UniPathway" id="UPA00702">
    <property type="reaction ID" value="UER00714"/>
</dbReference>
<dbReference type="Proteomes" id="UP000001873">
    <property type="component" value="Chromosome"/>
</dbReference>
<dbReference type="GO" id="GO:0050044">
    <property type="term" value="F:galactose-6-phosphate isomerase activity"/>
    <property type="evidence" value="ECO:0007669"/>
    <property type="project" value="UniProtKB-UniRule"/>
</dbReference>
<dbReference type="GO" id="GO:0004751">
    <property type="term" value="F:ribose-5-phosphate isomerase activity"/>
    <property type="evidence" value="ECO:0007669"/>
    <property type="project" value="TreeGrafter"/>
</dbReference>
<dbReference type="GO" id="GO:0019316">
    <property type="term" value="P:D-allose catabolic process"/>
    <property type="evidence" value="ECO:0007669"/>
    <property type="project" value="TreeGrafter"/>
</dbReference>
<dbReference type="GO" id="GO:0019388">
    <property type="term" value="P:galactose catabolic process"/>
    <property type="evidence" value="ECO:0007669"/>
    <property type="project" value="UniProtKB-UniPathway"/>
</dbReference>
<dbReference type="GO" id="GO:0019512">
    <property type="term" value="P:lactose catabolic process via tagatose-6-phosphate"/>
    <property type="evidence" value="ECO:0007669"/>
    <property type="project" value="UniProtKB-UniRule"/>
</dbReference>
<dbReference type="GO" id="GO:0009052">
    <property type="term" value="P:pentose-phosphate shunt, non-oxidative branch"/>
    <property type="evidence" value="ECO:0007669"/>
    <property type="project" value="TreeGrafter"/>
</dbReference>
<dbReference type="Gene3D" id="3.40.1400.10">
    <property type="entry name" value="Sugar-phosphate isomerase, RpiB/LacA/LacB"/>
    <property type="match status" value="1"/>
</dbReference>
<dbReference type="HAMAP" id="MF_01556">
    <property type="entry name" value="LacB"/>
    <property type="match status" value="1"/>
</dbReference>
<dbReference type="InterPro" id="IPR004784">
    <property type="entry name" value="LacB"/>
</dbReference>
<dbReference type="InterPro" id="IPR003500">
    <property type="entry name" value="RpiB_LacA_LacB"/>
</dbReference>
<dbReference type="InterPro" id="IPR036569">
    <property type="entry name" value="RpiB_LacA_LacB_sf"/>
</dbReference>
<dbReference type="NCBIfam" id="TIGR01119">
    <property type="entry name" value="lacB"/>
    <property type="match status" value="1"/>
</dbReference>
<dbReference type="NCBIfam" id="NF004051">
    <property type="entry name" value="PRK05571.1"/>
    <property type="match status" value="1"/>
</dbReference>
<dbReference type="NCBIfam" id="NF006381">
    <property type="entry name" value="PRK08622.1"/>
    <property type="match status" value="1"/>
</dbReference>
<dbReference type="NCBIfam" id="NF009258">
    <property type="entry name" value="PRK12615.1"/>
    <property type="match status" value="1"/>
</dbReference>
<dbReference type="NCBIfam" id="TIGR00689">
    <property type="entry name" value="rpiB_lacA_lacB"/>
    <property type="match status" value="1"/>
</dbReference>
<dbReference type="PANTHER" id="PTHR30345:SF0">
    <property type="entry name" value="DNA DAMAGE-REPAIR_TOLERATION PROTEIN DRT102"/>
    <property type="match status" value="1"/>
</dbReference>
<dbReference type="PANTHER" id="PTHR30345">
    <property type="entry name" value="RIBOSE-5-PHOSPHATE ISOMERASE B"/>
    <property type="match status" value="1"/>
</dbReference>
<dbReference type="Pfam" id="PF02502">
    <property type="entry name" value="LacAB_rpiB"/>
    <property type="match status" value="1"/>
</dbReference>
<dbReference type="PIRSF" id="PIRSF005384">
    <property type="entry name" value="RpiB_LacA_B"/>
    <property type="match status" value="1"/>
</dbReference>
<dbReference type="SUPFAM" id="SSF89623">
    <property type="entry name" value="Ribose/Galactose isomerase RpiB/AlsB"/>
    <property type="match status" value="1"/>
</dbReference>
<organism>
    <name type="scientific">Streptococcus equi subsp. zooepidemicus (strain MGCS10565)</name>
    <dbReference type="NCBI Taxonomy" id="552526"/>
    <lineage>
        <taxon>Bacteria</taxon>
        <taxon>Bacillati</taxon>
        <taxon>Bacillota</taxon>
        <taxon>Bacilli</taxon>
        <taxon>Lactobacillales</taxon>
        <taxon>Streptococcaceae</taxon>
        <taxon>Streptococcus</taxon>
    </lineage>
</organism>
<proteinExistence type="inferred from homology"/>